<comment type="similarity">
    <text evidence="1">Belongs to the bacterial ribosomal protein bL32 family.</text>
</comment>
<organism>
    <name type="scientific">Shewanella putrefaciens (strain CN-32 / ATCC BAA-453)</name>
    <dbReference type="NCBI Taxonomy" id="319224"/>
    <lineage>
        <taxon>Bacteria</taxon>
        <taxon>Pseudomonadati</taxon>
        <taxon>Pseudomonadota</taxon>
        <taxon>Gammaproteobacteria</taxon>
        <taxon>Alteromonadales</taxon>
        <taxon>Shewanellaceae</taxon>
        <taxon>Shewanella</taxon>
    </lineage>
</organism>
<protein>
    <recommendedName>
        <fullName evidence="1">Large ribosomal subunit protein bL32</fullName>
    </recommendedName>
    <alternativeName>
        <fullName evidence="3">50S ribosomal protein L32</fullName>
    </alternativeName>
</protein>
<evidence type="ECO:0000255" key="1">
    <source>
        <dbReference type="HAMAP-Rule" id="MF_00340"/>
    </source>
</evidence>
<evidence type="ECO:0000256" key="2">
    <source>
        <dbReference type="SAM" id="MobiDB-lite"/>
    </source>
</evidence>
<evidence type="ECO:0000305" key="3"/>
<dbReference type="EMBL" id="CP000681">
    <property type="protein sequence ID" value="ABP75303.1"/>
    <property type="molecule type" value="Genomic_DNA"/>
</dbReference>
<dbReference type="SMR" id="A4Y5S0"/>
<dbReference type="STRING" id="319224.Sputcn32_1578"/>
<dbReference type="KEGG" id="spc:Sputcn32_1578"/>
<dbReference type="eggNOG" id="COG0333">
    <property type="taxonomic scope" value="Bacteria"/>
</dbReference>
<dbReference type="HOGENOM" id="CLU_129084_2_1_6"/>
<dbReference type="GO" id="GO:0015934">
    <property type="term" value="C:large ribosomal subunit"/>
    <property type="evidence" value="ECO:0007669"/>
    <property type="project" value="InterPro"/>
</dbReference>
<dbReference type="GO" id="GO:0003735">
    <property type="term" value="F:structural constituent of ribosome"/>
    <property type="evidence" value="ECO:0007669"/>
    <property type="project" value="InterPro"/>
</dbReference>
<dbReference type="GO" id="GO:0006412">
    <property type="term" value="P:translation"/>
    <property type="evidence" value="ECO:0007669"/>
    <property type="project" value="UniProtKB-UniRule"/>
</dbReference>
<dbReference type="HAMAP" id="MF_00340">
    <property type="entry name" value="Ribosomal_bL32"/>
    <property type="match status" value="1"/>
</dbReference>
<dbReference type="InterPro" id="IPR002677">
    <property type="entry name" value="Ribosomal_bL32"/>
</dbReference>
<dbReference type="InterPro" id="IPR044957">
    <property type="entry name" value="Ribosomal_bL32_bact"/>
</dbReference>
<dbReference type="InterPro" id="IPR011332">
    <property type="entry name" value="Ribosomal_zn-bd"/>
</dbReference>
<dbReference type="NCBIfam" id="TIGR01031">
    <property type="entry name" value="rpmF_bact"/>
    <property type="match status" value="1"/>
</dbReference>
<dbReference type="PANTHER" id="PTHR35534">
    <property type="entry name" value="50S RIBOSOMAL PROTEIN L32"/>
    <property type="match status" value="1"/>
</dbReference>
<dbReference type="PANTHER" id="PTHR35534:SF1">
    <property type="entry name" value="LARGE RIBOSOMAL SUBUNIT PROTEIN BL32"/>
    <property type="match status" value="1"/>
</dbReference>
<dbReference type="Pfam" id="PF01783">
    <property type="entry name" value="Ribosomal_L32p"/>
    <property type="match status" value="1"/>
</dbReference>
<dbReference type="SUPFAM" id="SSF57829">
    <property type="entry name" value="Zn-binding ribosomal proteins"/>
    <property type="match status" value="1"/>
</dbReference>
<accession>A4Y5S0</accession>
<keyword id="KW-0687">Ribonucleoprotein</keyword>
<keyword id="KW-0689">Ribosomal protein</keyword>
<feature type="chain" id="PRO_1000005079" description="Large ribosomal subunit protein bL32">
    <location>
        <begin position="1"/>
        <end position="56"/>
    </location>
</feature>
<feature type="region of interest" description="Disordered" evidence="2">
    <location>
        <begin position="1"/>
        <end position="26"/>
    </location>
</feature>
<feature type="compositionally biased region" description="Basic residues" evidence="2">
    <location>
        <begin position="7"/>
        <end position="16"/>
    </location>
</feature>
<reference key="1">
    <citation type="submission" date="2007-04" db="EMBL/GenBank/DDBJ databases">
        <title>Complete sequence of Shewanella putrefaciens CN-32.</title>
        <authorList>
            <consortium name="US DOE Joint Genome Institute"/>
            <person name="Copeland A."/>
            <person name="Lucas S."/>
            <person name="Lapidus A."/>
            <person name="Barry K."/>
            <person name="Detter J.C."/>
            <person name="Glavina del Rio T."/>
            <person name="Hammon N."/>
            <person name="Israni S."/>
            <person name="Dalin E."/>
            <person name="Tice H."/>
            <person name="Pitluck S."/>
            <person name="Chain P."/>
            <person name="Malfatti S."/>
            <person name="Shin M."/>
            <person name="Vergez L."/>
            <person name="Schmutz J."/>
            <person name="Larimer F."/>
            <person name="Land M."/>
            <person name="Hauser L."/>
            <person name="Kyrpides N."/>
            <person name="Mikhailova N."/>
            <person name="Romine M.F."/>
            <person name="Fredrickson J."/>
            <person name="Tiedje J."/>
            <person name="Richardson P."/>
        </authorList>
    </citation>
    <scope>NUCLEOTIDE SEQUENCE [LARGE SCALE GENOMIC DNA]</scope>
    <source>
        <strain>CN-32 / ATCC BAA-453</strain>
    </source>
</reference>
<proteinExistence type="inferred from homology"/>
<name>RL32_SHEPC</name>
<gene>
    <name evidence="1" type="primary">rpmF</name>
    <name type="ordered locus">Sputcn32_1578</name>
</gene>
<sequence length="56" mass="6299">MAVQQNKKSRSKRGMRRSHDALSTAQLSVDATSGEIHMRHNVTADGFYRGKKVINK</sequence>